<organism>
    <name type="scientific">Cryptococcus neoformans var. neoformans serotype D (strain JEC21 / ATCC MYA-565)</name>
    <name type="common">Filobasidiella neoformans</name>
    <dbReference type="NCBI Taxonomy" id="214684"/>
    <lineage>
        <taxon>Eukaryota</taxon>
        <taxon>Fungi</taxon>
        <taxon>Dikarya</taxon>
        <taxon>Basidiomycota</taxon>
        <taxon>Agaricomycotina</taxon>
        <taxon>Tremellomycetes</taxon>
        <taxon>Tremellales</taxon>
        <taxon>Cryptococcaceae</taxon>
        <taxon>Cryptococcus</taxon>
        <taxon>Cryptococcus neoformans species complex</taxon>
    </lineage>
</organism>
<comment type="function">
    <text evidence="6">ATPase component of the INO80 complex which remodels chromatin by shifting nucleosomes and is involved in DNA repair.</text>
</comment>
<comment type="catalytic activity">
    <reaction evidence="1">
        <text>ATP + H2O = ADP + phosphate + H(+)</text>
        <dbReference type="Rhea" id="RHEA:13065"/>
        <dbReference type="ChEBI" id="CHEBI:15377"/>
        <dbReference type="ChEBI" id="CHEBI:15378"/>
        <dbReference type="ChEBI" id="CHEBI:30616"/>
        <dbReference type="ChEBI" id="CHEBI:43474"/>
        <dbReference type="ChEBI" id="CHEBI:456216"/>
    </reaction>
</comment>
<comment type="subunit">
    <text evidence="6">Component of the INO80 chromatin-remodeling complex.</text>
</comment>
<comment type="subcellular location">
    <subcellularLocation>
        <location evidence="6">Nucleus</location>
    </subcellularLocation>
</comment>
<comment type="domain">
    <text evidence="2">The DBINO region is involved in binding to DNA.</text>
</comment>
<comment type="similarity">
    <text evidence="8">Belongs to the SNF2/RAD54 helicase family.</text>
</comment>
<protein>
    <recommendedName>
        <fullName evidence="1">Chromatin-remodeling ATPase INO80</fullName>
        <ecNumber evidence="1">3.6.4.-</ecNumber>
    </recommendedName>
</protein>
<reference key="1">
    <citation type="journal article" date="2005" name="Science">
        <title>The genome of the basidiomycetous yeast and human pathogen Cryptococcus neoformans.</title>
        <authorList>
            <person name="Loftus B.J."/>
            <person name="Fung E."/>
            <person name="Roncaglia P."/>
            <person name="Rowley D."/>
            <person name="Amedeo P."/>
            <person name="Bruno D."/>
            <person name="Vamathevan J."/>
            <person name="Miranda M."/>
            <person name="Anderson I.J."/>
            <person name="Fraser J.A."/>
            <person name="Allen J.E."/>
            <person name="Bosdet I.E."/>
            <person name="Brent M.R."/>
            <person name="Chiu R."/>
            <person name="Doering T.L."/>
            <person name="Donlin M.J."/>
            <person name="D'Souza C.A."/>
            <person name="Fox D.S."/>
            <person name="Grinberg V."/>
            <person name="Fu J."/>
            <person name="Fukushima M."/>
            <person name="Haas B.J."/>
            <person name="Huang J.C."/>
            <person name="Janbon G."/>
            <person name="Jones S.J.M."/>
            <person name="Koo H.L."/>
            <person name="Krzywinski M.I."/>
            <person name="Kwon-Chung K.J."/>
            <person name="Lengeler K.B."/>
            <person name="Maiti R."/>
            <person name="Marra M.A."/>
            <person name="Marra R.E."/>
            <person name="Mathewson C.A."/>
            <person name="Mitchell T.G."/>
            <person name="Pertea M."/>
            <person name="Riggs F.R."/>
            <person name="Salzberg S.L."/>
            <person name="Schein J.E."/>
            <person name="Shvartsbeyn A."/>
            <person name="Shin H."/>
            <person name="Shumway M."/>
            <person name="Specht C.A."/>
            <person name="Suh B.B."/>
            <person name="Tenney A."/>
            <person name="Utterback T.R."/>
            <person name="Wickes B.L."/>
            <person name="Wortman J.R."/>
            <person name="Wye N.H."/>
            <person name="Kronstad J.W."/>
            <person name="Lodge J.K."/>
            <person name="Heitman J."/>
            <person name="Davis R.W."/>
            <person name="Fraser C.M."/>
            <person name="Hyman R.W."/>
        </authorList>
    </citation>
    <scope>NUCLEOTIDE SEQUENCE [LARGE SCALE GENOMIC DNA]</scope>
    <source>
        <strain>JEC21 / ATCC MYA-565</strain>
    </source>
</reference>
<feature type="chain" id="PRO_0000074322" description="Chromatin-remodeling ATPase INO80">
    <location>
        <begin position="1"/>
        <end position="1853"/>
    </location>
</feature>
<feature type="domain" description="DBINO" evidence="6">
    <location>
        <begin position="717"/>
        <end position="847"/>
    </location>
</feature>
<feature type="domain" description="Helicase ATP-binding" evidence="4">
    <location>
        <begin position="971"/>
        <end position="1143"/>
    </location>
</feature>
<feature type="domain" description="Helicase C-terminal" evidence="5">
    <location>
        <begin position="1545"/>
        <end position="1695"/>
    </location>
</feature>
<feature type="region of interest" description="Disordered" evidence="7">
    <location>
        <begin position="1"/>
        <end position="148"/>
    </location>
</feature>
<feature type="region of interest" description="Disordered" evidence="7">
    <location>
        <begin position="189"/>
        <end position="250"/>
    </location>
</feature>
<feature type="region of interest" description="Disordered" evidence="7">
    <location>
        <begin position="391"/>
        <end position="430"/>
    </location>
</feature>
<feature type="region of interest" description="Disordered" evidence="7">
    <location>
        <begin position="478"/>
        <end position="534"/>
    </location>
</feature>
<feature type="region of interest" description="Disordered" evidence="7">
    <location>
        <begin position="546"/>
        <end position="676"/>
    </location>
</feature>
<feature type="region of interest" description="Disordered" evidence="7">
    <location>
        <begin position="1768"/>
        <end position="1788"/>
    </location>
</feature>
<feature type="region of interest" description="Disordered" evidence="7">
    <location>
        <begin position="1828"/>
        <end position="1853"/>
    </location>
</feature>
<feature type="coiled-coil region" evidence="3">
    <location>
        <begin position="790"/>
        <end position="833"/>
    </location>
</feature>
<feature type="short sequence motif" description="DEAQ box">
    <location>
        <begin position="1094"/>
        <end position="1097"/>
    </location>
</feature>
<feature type="compositionally biased region" description="Basic residues" evidence="7">
    <location>
        <begin position="7"/>
        <end position="19"/>
    </location>
</feature>
<feature type="compositionally biased region" description="Polar residues" evidence="7">
    <location>
        <begin position="40"/>
        <end position="53"/>
    </location>
</feature>
<feature type="compositionally biased region" description="Pro residues" evidence="7">
    <location>
        <begin position="55"/>
        <end position="66"/>
    </location>
</feature>
<feature type="compositionally biased region" description="Polar residues" evidence="7">
    <location>
        <begin position="105"/>
        <end position="117"/>
    </location>
</feature>
<feature type="compositionally biased region" description="Basic and acidic residues" evidence="7">
    <location>
        <begin position="189"/>
        <end position="201"/>
    </location>
</feature>
<feature type="compositionally biased region" description="Low complexity" evidence="7">
    <location>
        <begin position="392"/>
        <end position="406"/>
    </location>
</feature>
<feature type="compositionally biased region" description="Basic residues" evidence="7">
    <location>
        <begin position="495"/>
        <end position="507"/>
    </location>
</feature>
<feature type="compositionally biased region" description="Basic and acidic residues" evidence="7">
    <location>
        <begin position="508"/>
        <end position="517"/>
    </location>
</feature>
<feature type="compositionally biased region" description="Basic and acidic residues" evidence="7">
    <location>
        <begin position="640"/>
        <end position="651"/>
    </location>
</feature>
<feature type="binding site" evidence="4">
    <location>
        <begin position="984"/>
        <end position="991"/>
    </location>
    <ligand>
        <name>ATP</name>
        <dbReference type="ChEBI" id="CHEBI:30616"/>
    </ligand>
</feature>
<gene>
    <name type="primary">INO80</name>
    <name type="ordered locus">CND06010</name>
</gene>
<evidence type="ECO:0000250" key="1">
    <source>
        <dbReference type="UniProtKB" id="P53115"/>
    </source>
</evidence>
<evidence type="ECO:0000250" key="2">
    <source>
        <dbReference type="UniProtKB" id="Q9ULG1"/>
    </source>
</evidence>
<evidence type="ECO:0000255" key="3"/>
<evidence type="ECO:0000255" key="4">
    <source>
        <dbReference type="PROSITE-ProRule" id="PRU00541"/>
    </source>
</evidence>
<evidence type="ECO:0000255" key="5">
    <source>
        <dbReference type="PROSITE-ProRule" id="PRU00542"/>
    </source>
</evidence>
<evidence type="ECO:0000255" key="6">
    <source>
        <dbReference type="PROSITE-ProRule" id="PRU00746"/>
    </source>
</evidence>
<evidence type="ECO:0000256" key="7">
    <source>
        <dbReference type="SAM" id="MobiDB-lite"/>
    </source>
</evidence>
<evidence type="ECO:0000305" key="8"/>
<name>INO80_CRYNJ</name>
<proteinExistence type="inferred from homology"/>
<accession>P0CO16</accession>
<accession>Q55US0</accession>
<accession>Q5KHM0</accession>
<dbReference type="EC" id="3.6.4.-" evidence="1"/>
<dbReference type="EMBL" id="AE017344">
    <property type="protein sequence ID" value="AAW43182.2"/>
    <property type="molecule type" value="Genomic_DNA"/>
</dbReference>
<dbReference type="RefSeq" id="XP_570489.1">
    <property type="nucleotide sequence ID" value="XM_570489.1"/>
</dbReference>
<dbReference type="SMR" id="P0CO16"/>
<dbReference type="FunCoup" id="P0CO16">
    <property type="interactions" value="760"/>
</dbReference>
<dbReference type="STRING" id="214684.P0CO16"/>
<dbReference type="PaxDb" id="214684-P0CO16"/>
<dbReference type="EnsemblFungi" id="AAW43182">
    <property type="protein sequence ID" value="AAW43182"/>
    <property type="gene ID" value="CND06010"/>
</dbReference>
<dbReference type="eggNOG" id="KOG0388">
    <property type="taxonomic scope" value="Eukaryota"/>
</dbReference>
<dbReference type="HOGENOM" id="CLU_002244_0_0_1"/>
<dbReference type="InParanoid" id="P0CO16"/>
<dbReference type="Proteomes" id="UP000002149">
    <property type="component" value="Chromosome 4"/>
</dbReference>
<dbReference type="GO" id="GO:0031011">
    <property type="term" value="C:Ino80 complex"/>
    <property type="evidence" value="ECO:0000318"/>
    <property type="project" value="GO_Central"/>
</dbReference>
<dbReference type="GO" id="GO:0005524">
    <property type="term" value="F:ATP binding"/>
    <property type="evidence" value="ECO:0007669"/>
    <property type="project" value="UniProtKB-KW"/>
</dbReference>
<dbReference type="GO" id="GO:0016887">
    <property type="term" value="F:ATP hydrolysis activity"/>
    <property type="evidence" value="ECO:0000318"/>
    <property type="project" value="GO_Central"/>
</dbReference>
<dbReference type="GO" id="GO:0140658">
    <property type="term" value="F:ATP-dependent chromatin remodeler activity"/>
    <property type="evidence" value="ECO:0007669"/>
    <property type="project" value="InterPro"/>
</dbReference>
<dbReference type="GO" id="GO:0003677">
    <property type="term" value="F:DNA binding"/>
    <property type="evidence" value="ECO:0007669"/>
    <property type="project" value="UniProtKB-KW"/>
</dbReference>
<dbReference type="GO" id="GO:0042393">
    <property type="term" value="F:histone binding"/>
    <property type="evidence" value="ECO:0000318"/>
    <property type="project" value="GO_Central"/>
</dbReference>
<dbReference type="GO" id="GO:0006338">
    <property type="term" value="P:chromatin remodeling"/>
    <property type="evidence" value="ECO:0000318"/>
    <property type="project" value="GO_Central"/>
</dbReference>
<dbReference type="GO" id="GO:0006281">
    <property type="term" value="P:DNA repair"/>
    <property type="evidence" value="ECO:0000318"/>
    <property type="project" value="GO_Central"/>
</dbReference>
<dbReference type="GO" id="GO:0006351">
    <property type="term" value="P:DNA-templated transcription"/>
    <property type="evidence" value="ECO:0007669"/>
    <property type="project" value="InterPro"/>
</dbReference>
<dbReference type="GO" id="GO:0060255">
    <property type="term" value="P:regulation of macromolecule metabolic process"/>
    <property type="evidence" value="ECO:0007669"/>
    <property type="project" value="UniProtKB-ARBA"/>
</dbReference>
<dbReference type="CDD" id="cd18002">
    <property type="entry name" value="DEXQc_INO80"/>
    <property type="match status" value="1"/>
</dbReference>
<dbReference type="CDD" id="cd18793">
    <property type="entry name" value="SF2_C_SNF"/>
    <property type="match status" value="1"/>
</dbReference>
<dbReference type="FunFam" id="3.40.50.10810:FF:000022">
    <property type="entry name" value="Blast:Putative DNA helicase Ino80"/>
    <property type="match status" value="1"/>
</dbReference>
<dbReference type="FunFam" id="3.40.50.300:FF:001304">
    <property type="entry name" value="DNA helicase INO80"/>
    <property type="match status" value="1"/>
</dbReference>
<dbReference type="Gene3D" id="3.40.50.300">
    <property type="entry name" value="P-loop containing nucleotide triphosphate hydrolases"/>
    <property type="match status" value="2"/>
</dbReference>
<dbReference type="Gene3D" id="3.40.50.10810">
    <property type="entry name" value="Tandem AAA-ATPase domain"/>
    <property type="match status" value="1"/>
</dbReference>
<dbReference type="InterPro" id="IPR020838">
    <property type="entry name" value="DBINO"/>
</dbReference>
<dbReference type="InterPro" id="IPR031047">
    <property type="entry name" value="DEXQc_INO80"/>
</dbReference>
<dbReference type="InterPro" id="IPR014001">
    <property type="entry name" value="Helicase_ATP-bd"/>
</dbReference>
<dbReference type="InterPro" id="IPR001650">
    <property type="entry name" value="Helicase_C-like"/>
</dbReference>
<dbReference type="InterPro" id="IPR050520">
    <property type="entry name" value="INO80/SWR1_helicase"/>
</dbReference>
<dbReference type="InterPro" id="IPR027417">
    <property type="entry name" value="P-loop_NTPase"/>
</dbReference>
<dbReference type="InterPro" id="IPR038718">
    <property type="entry name" value="SNF2-like_sf"/>
</dbReference>
<dbReference type="InterPro" id="IPR049730">
    <property type="entry name" value="SNF2/RAD54-like_C"/>
</dbReference>
<dbReference type="InterPro" id="IPR000330">
    <property type="entry name" value="SNF2_N"/>
</dbReference>
<dbReference type="PANTHER" id="PTHR45685:SF2">
    <property type="entry name" value="CHROMATIN-REMODELING ATPASE INO80"/>
    <property type="match status" value="1"/>
</dbReference>
<dbReference type="PANTHER" id="PTHR45685">
    <property type="entry name" value="HELICASE SRCAP-RELATED"/>
    <property type="match status" value="1"/>
</dbReference>
<dbReference type="Pfam" id="PF13892">
    <property type="entry name" value="DBINO"/>
    <property type="match status" value="1"/>
</dbReference>
<dbReference type="Pfam" id="PF00271">
    <property type="entry name" value="Helicase_C"/>
    <property type="match status" value="1"/>
</dbReference>
<dbReference type="Pfam" id="PF00176">
    <property type="entry name" value="SNF2-rel_dom"/>
    <property type="match status" value="1"/>
</dbReference>
<dbReference type="SMART" id="SM00487">
    <property type="entry name" value="DEXDc"/>
    <property type="match status" value="1"/>
</dbReference>
<dbReference type="SMART" id="SM00490">
    <property type="entry name" value="HELICc"/>
    <property type="match status" value="1"/>
</dbReference>
<dbReference type="SUPFAM" id="SSF52540">
    <property type="entry name" value="P-loop containing nucleoside triphosphate hydrolases"/>
    <property type="match status" value="2"/>
</dbReference>
<dbReference type="PROSITE" id="PS51413">
    <property type="entry name" value="DBINO"/>
    <property type="match status" value="1"/>
</dbReference>
<dbReference type="PROSITE" id="PS51192">
    <property type="entry name" value="HELICASE_ATP_BIND_1"/>
    <property type="match status" value="1"/>
</dbReference>
<dbReference type="PROSITE" id="PS51194">
    <property type="entry name" value="HELICASE_CTER"/>
    <property type="match status" value="1"/>
</dbReference>
<keyword id="KW-0010">Activator</keyword>
<keyword id="KW-0067">ATP-binding</keyword>
<keyword id="KW-0175">Coiled coil</keyword>
<keyword id="KW-0227">DNA damage</keyword>
<keyword id="KW-0234">DNA repair</keyword>
<keyword id="KW-0238">DNA-binding</keyword>
<keyword id="KW-0378">Hydrolase</keyword>
<keyword id="KW-0547">Nucleotide-binding</keyword>
<keyword id="KW-0539">Nucleus</keyword>
<keyword id="KW-1185">Reference proteome</keyword>
<keyword id="KW-0804">Transcription</keyword>
<keyword id="KW-0805">Transcription regulation</keyword>
<sequence length="1853" mass="206245">MADHHDSRRRYSHTRHHSASKSPVALMDRIVERSPPLHPQPSSRMSLSALVNDSPSPPRRITPPPAAYAERHPHPSAYYPSSTTDPGYMGAMDDRRYSYPPPRTSYVQPSTHPSPTASDYRYRSPVLPQHPPTHHSPSSYSASLYGQPKEDPAIAYARMREEMRTAEEARREAEALEYRRKRDMEFAARRPGSELMDDPRRIPHSSFPRSQMYGPSADQSRVMPSRNGKDYISEPPSPSELYPTDEDTERLPIDRYRRDIDVPPLPRQLPPPPSEIGRMADRARSPSAPIAPPLLKVVRKRTKVIRPNDFLVGNEDVWEDGLIRYQSKREDEVRAIAQWAASCQVRNGVGEPSLPQTQDESIKVRKINGDIATPTNKKKRKSRKLNLDDELLGLASSPPGSPNAAAEAEKSESKHHIYGMNGPIDPANPPSPSTIVYPSGLTRAEVIAKCEAGDVEGLTEDDVKAVQDEMWMREKAAQAAENGGVLPTNKDGTVRRKPGPAKGWRKIRGIDKKKETTPGKAQSTTAGSVAGSVADEEAEADIAALLDDSIAKKGKKVKRRKLEEPGAESPRFADAEDEYNEHRPSDSVLLDEIEDEHSRAGSVGESNALDTLPAASAPPKKKNSKTKEPGVGKGRWTRPTKPEKELVKKAEALASRTSKASLAGPSDDTFGVGPGPAEEVQEEIKHEYAPNTHDPRGVSENEAKIRHELVEDLQKQAWSNIVRDVPRIYRVFQGYDQSMKQIAQRRAQACVRNAFGQRNQKTMQRQSGKVNKEGAAKAKRIVKELAAFWRKNEKDEVIARKKAEREALERAKAEEEARETKRQSRKLNFLLTQTELYSHFIGKKIKTKEAEAAEGMDVEEEEKRGMEEIAIGEDGEPLPDLDYDEDDEENLRKHAARGAQAAIQAARDKARAFDDSIVGRGAPLPGDDTMDGDELNFQNPSLGENSVTITQPKMLMAQLKEYQLKGLTWLGNLYEQGINGILADEMGLGKTIQSISLLAYLAEHHNLWGPFLVIAPASTLHNWQQELARFVPRLKALPYWGSPKDRETLRKIWSRKNQTFSEDSPFHILITSYQLAVQDEKYLQGMKWQYMILDEAQAIKSSSSARWKSLLSLHCRNRLLLTGTPIQNSMHELWALLHFIMPQLFDSHEEFAEWFSKDIESSSGGVTGNLKPEQLKRLHMILKPFMLRRVKKHVQKELGDKIEIDLLVDLSQRQREIYKALRQRVSITDLLATAENNTDNGNPKNMRSLVNLVMQFRKVCNHPDLFERADVVSPFVFGEFSQSGNLAREGDGMYLPDSARNAIEVQIPRILWTDGGKLDIPGEQSLAGSDTKILQNLLNIWTPEWINERTKCADAEFGFVKLVGSSPGETSRSAKSPVLVQLLEGAEKERRWTEEGRFVDDSEFAASVKKGFRVPSVIPVLTQPGQVSLREISRRVWDESYLSRDDARCIGDYAIAPIVKPIASNRSFLNAQDRILNQPLAHSTLYGLAPSELHDPLAAEQFSRIAPSVPLTGLIPSSASSQTPVSPLHIPPTKRLIVDSAKLARLDSLLRELKAGGHRVLLYFQMTKMMDLIEEYLIFRQYKYLRLDGSSPIAERRDMVTSWQTNPDIFVFCLSTRAGGLGINLTAADTVIFYDHDWNPSSDAQAMDRAHRVGQTKQVTVYRLVARGTIEERILQMARGKKDIQDVVVGTKSVSDVAKPSEIVSLFMDDEELAESVAKRKQAEAHGYIAPTIIPNGRRSQFGDGLVLDDGEGDDGFFNAAAAARANAEEEEGLGAEEESKGKGKAKAAAAVTFPVPGEKRSHKKGMGKKAQAAAAAAALERVIAGNEEPLAASKPPAKKKVKIALGPDGLPL</sequence>